<dbReference type="EC" id="5.4.2.12" evidence="1"/>
<dbReference type="EMBL" id="AE017244">
    <property type="protein sequence ID" value="AAZ53958.1"/>
    <property type="molecule type" value="Genomic_DNA"/>
</dbReference>
<dbReference type="RefSeq" id="WP_011290381.1">
    <property type="nucleotide sequence ID" value="NC_007332.1"/>
</dbReference>
<dbReference type="SMR" id="Q4A7D1"/>
<dbReference type="KEGG" id="mhp:MHP7448_0595"/>
<dbReference type="HOGENOM" id="CLU_026099_2_0_14"/>
<dbReference type="UniPathway" id="UPA00109">
    <property type="reaction ID" value="UER00186"/>
</dbReference>
<dbReference type="Proteomes" id="UP000000553">
    <property type="component" value="Chromosome"/>
</dbReference>
<dbReference type="GO" id="GO:0005829">
    <property type="term" value="C:cytosol"/>
    <property type="evidence" value="ECO:0007669"/>
    <property type="project" value="TreeGrafter"/>
</dbReference>
<dbReference type="GO" id="GO:0030145">
    <property type="term" value="F:manganese ion binding"/>
    <property type="evidence" value="ECO:0007669"/>
    <property type="project" value="UniProtKB-UniRule"/>
</dbReference>
<dbReference type="GO" id="GO:0004619">
    <property type="term" value="F:phosphoglycerate mutase activity"/>
    <property type="evidence" value="ECO:0007669"/>
    <property type="project" value="UniProtKB-EC"/>
</dbReference>
<dbReference type="GO" id="GO:0006007">
    <property type="term" value="P:glucose catabolic process"/>
    <property type="evidence" value="ECO:0007669"/>
    <property type="project" value="InterPro"/>
</dbReference>
<dbReference type="GO" id="GO:0006096">
    <property type="term" value="P:glycolytic process"/>
    <property type="evidence" value="ECO:0007669"/>
    <property type="project" value="UniProtKB-UniRule"/>
</dbReference>
<dbReference type="CDD" id="cd16010">
    <property type="entry name" value="iPGM"/>
    <property type="match status" value="1"/>
</dbReference>
<dbReference type="FunFam" id="3.40.1450.10:FF:000002">
    <property type="entry name" value="2,3-bisphosphoglycerate-independent phosphoglycerate mutase"/>
    <property type="match status" value="1"/>
</dbReference>
<dbReference type="Gene3D" id="3.40.720.10">
    <property type="entry name" value="Alkaline Phosphatase, subunit A"/>
    <property type="match status" value="1"/>
</dbReference>
<dbReference type="Gene3D" id="3.40.1450.10">
    <property type="entry name" value="BPG-independent phosphoglycerate mutase, domain B"/>
    <property type="match status" value="1"/>
</dbReference>
<dbReference type="HAMAP" id="MF_01038">
    <property type="entry name" value="GpmI"/>
    <property type="match status" value="1"/>
</dbReference>
<dbReference type="InterPro" id="IPR017850">
    <property type="entry name" value="Alkaline_phosphatase_core_sf"/>
</dbReference>
<dbReference type="InterPro" id="IPR011258">
    <property type="entry name" value="BPG-indep_PGM_N"/>
</dbReference>
<dbReference type="InterPro" id="IPR006124">
    <property type="entry name" value="Metalloenzyme"/>
</dbReference>
<dbReference type="InterPro" id="IPR036646">
    <property type="entry name" value="PGAM_B_sf"/>
</dbReference>
<dbReference type="InterPro" id="IPR005995">
    <property type="entry name" value="Pgm_bpd_ind"/>
</dbReference>
<dbReference type="NCBIfam" id="TIGR01307">
    <property type="entry name" value="pgm_bpd_ind"/>
    <property type="match status" value="1"/>
</dbReference>
<dbReference type="PANTHER" id="PTHR31637">
    <property type="entry name" value="2,3-BISPHOSPHOGLYCERATE-INDEPENDENT PHOSPHOGLYCERATE MUTASE"/>
    <property type="match status" value="1"/>
</dbReference>
<dbReference type="PANTHER" id="PTHR31637:SF0">
    <property type="entry name" value="2,3-BISPHOSPHOGLYCERATE-INDEPENDENT PHOSPHOGLYCERATE MUTASE"/>
    <property type="match status" value="1"/>
</dbReference>
<dbReference type="Pfam" id="PF06415">
    <property type="entry name" value="iPGM_N"/>
    <property type="match status" value="1"/>
</dbReference>
<dbReference type="Pfam" id="PF01676">
    <property type="entry name" value="Metalloenzyme"/>
    <property type="match status" value="1"/>
</dbReference>
<dbReference type="PIRSF" id="PIRSF001492">
    <property type="entry name" value="IPGAM"/>
    <property type="match status" value="1"/>
</dbReference>
<dbReference type="SUPFAM" id="SSF64158">
    <property type="entry name" value="2,3-Bisphosphoglycerate-independent phosphoglycerate mutase, substrate-binding domain"/>
    <property type="match status" value="1"/>
</dbReference>
<dbReference type="SUPFAM" id="SSF53649">
    <property type="entry name" value="Alkaline phosphatase-like"/>
    <property type="match status" value="1"/>
</dbReference>
<organism>
    <name type="scientific">Mesomycoplasma hyopneumoniae (strain 7448)</name>
    <name type="common">Mycoplasma hyopneumoniae</name>
    <dbReference type="NCBI Taxonomy" id="262722"/>
    <lineage>
        <taxon>Bacteria</taxon>
        <taxon>Bacillati</taxon>
        <taxon>Mycoplasmatota</taxon>
        <taxon>Mycoplasmoidales</taxon>
        <taxon>Metamycoplasmataceae</taxon>
        <taxon>Mesomycoplasma</taxon>
    </lineage>
</organism>
<sequence length="505" mass="56975">MKKKLVLIIIDGLGLRLESQGNGFALAKTPVFDRLFQEYPNSLIAASGQEVGLPEGQMGNSEVGHLNIGAGFVVYTGISIINNALKTGKFFENEKFILAFRHSIKTGFPLQIMGLFSPGGVHSHQDHLFALIDFAANFGVKKLNLHLFGDGRDVGPKSIKPWIKMLNLKLKNYENYKIASISGRFYSMDRDKMFDRVELGYNALLGKAENTFTDPIDYINFQYEKGVSDEFFEPAINLKVNKKDFLADDHPVIFFNFRPDRARQLSHLILQTDLYEQKPKNPIKTDVFVSMMKYEGINCLVAFEEMRVENPLGKLISMAGFRQLRLAETQKYAHVTFFVDGGVELELENSDRILIDSLKVQSYADFPQMSAVEITDKLLEVGQNYDFIIMNFANPDMVGHTGDLKATIKAVEILDFQIGRICKWAEEKNFDFFITADHGNAELTEDENGNPSTKHTTFPVMLISSDKTIKLKSGKLANIAPTILDYLGLDKHPDMDHDSLIIKDK</sequence>
<accession>Q4A7D1</accession>
<comment type="function">
    <text evidence="1">Catalyzes the interconversion of 2-phosphoglycerate and 3-phosphoglycerate.</text>
</comment>
<comment type="catalytic activity">
    <reaction evidence="1">
        <text>(2R)-2-phosphoglycerate = (2R)-3-phosphoglycerate</text>
        <dbReference type="Rhea" id="RHEA:15901"/>
        <dbReference type="ChEBI" id="CHEBI:58272"/>
        <dbReference type="ChEBI" id="CHEBI:58289"/>
        <dbReference type="EC" id="5.4.2.12"/>
    </reaction>
</comment>
<comment type="cofactor">
    <cofactor evidence="1">
        <name>Mn(2+)</name>
        <dbReference type="ChEBI" id="CHEBI:29035"/>
    </cofactor>
    <text evidence="1">Binds 2 manganese ions per subunit.</text>
</comment>
<comment type="pathway">
    <text evidence="1">Carbohydrate degradation; glycolysis; pyruvate from D-glyceraldehyde 3-phosphate: step 3/5.</text>
</comment>
<comment type="subunit">
    <text evidence="1">Monomer.</text>
</comment>
<comment type="similarity">
    <text evidence="1">Belongs to the BPG-independent phosphoglycerate mutase family.</text>
</comment>
<feature type="chain" id="PRO_0000212170" description="2,3-bisphosphoglycerate-independent phosphoglycerate mutase">
    <location>
        <begin position="1"/>
        <end position="505"/>
    </location>
</feature>
<feature type="active site" description="Phosphoserine intermediate" evidence="1">
    <location>
        <position position="61"/>
    </location>
</feature>
<feature type="binding site" evidence="1">
    <location>
        <position position="11"/>
    </location>
    <ligand>
        <name>Mn(2+)</name>
        <dbReference type="ChEBI" id="CHEBI:29035"/>
        <label>2</label>
    </ligand>
</feature>
<feature type="binding site" evidence="1">
    <location>
        <position position="61"/>
    </location>
    <ligand>
        <name>Mn(2+)</name>
        <dbReference type="ChEBI" id="CHEBI:29035"/>
        <label>2</label>
    </ligand>
</feature>
<feature type="binding site" evidence="1">
    <location>
        <position position="122"/>
    </location>
    <ligand>
        <name>substrate</name>
    </ligand>
</feature>
<feature type="binding site" evidence="1">
    <location>
        <begin position="152"/>
        <end position="153"/>
    </location>
    <ligand>
        <name>substrate</name>
    </ligand>
</feature>
<feature type="binding site" evidence="1">
    <location>
        <position position="184"/>
    </location>
    <ligand>
        <name>substrate</name>
    </ligand>
</feature>
<feature type="binding site" evidence="1">
    <location>
        <position position="190"/>
    </location>
    <ligand>
        <name>substrate</name>
    </ligand>
</feature>
<feature type="binding site" evidence="1">
    <location>
        <begin position="258"/>
        <end position="261"/>
    </location>
    <ligand>
        <name>substrate</name>
    </ligand>
</feature>
<feature type="binding site" evidence="1">
    <location>
        <position position="331"/>
    </location>
    <ligand>
        <name>substrate</name>
    </ligand>
</feature>
<feature type="binding site" evidence="1">
    <location>
        <position position="396"/>
    </location>
    <ligand>
        <name>Mn(2+)</name>
        <dbReference type="ChEBI" id="CHEBI:29035"/>
        <label>1</label>
    </ligand>
</feature>
<feature type="binding site" evidence="1">
    <location>
        <position position="400"/>
    </location>
    <ligand>
        <name>Mn(2+)</name>
        <dbReference type="ChEBI" id="CHEBI:29035"/>
        <label>1</label>
    </ligand>
</feature>
<feature type="binding site" evidence="1">
    <location>
        <position position="437"/>
    </location>
    <ligand>
        <name>Mn(2+)</name>
        <dbReference type="ChEBI" id="CHEBI:29035"/>
        <label>2</label>
    </ligand>
</feature>
<feature type="binding site" evidence="1">
    <location>
        <position position="438"/>
    </location>
    <ligand>
        <name>Mn(2+)</name>
        <dbReference type="ChEBI" id="CHEBI:29035"/>
        <label>2</label>
    </ligand>
</feature>
<feature type="binding site" evidence="1">
    <location>
        <position position="455"/>
    </location>
    <ligand>
        <name>Mn(2+)</name>
        <dbReference type="ChEBI" id="CHEBI:29035"/>
        <label>1</label>
    </ligand>
</feature>
<protein>
    <recommendedName>
        <fullName evidence="1">2,3-bisphosphoglycerate-independent phosphoglycerate mutase</fullName>
        <shortName evidence="1">BPG-independent PGAM</shortName>
        <shortName evidence="1">Phosphoglyceromutase</shortName>
        <shortName evidence="1">iPGM</shortName>
        <ecNumber evidence="1">5.4.2.12</ecNumber>
    </recommendedName>
</protein>
<keyword id="KW-0324">Glycolysis</keyword>
<keyword id="KW-0413">Isomerase</keyword>
<keyword id="KW-0464">Manganese</keyword>
<keyword id="KW-0479">Metal-binding</keyword>
<gene>
    <name evidence="1" type="primary">gpmI</name>
    <name type="synonym">pgm</name>
    <name type="ordered locus">MHP7448_0595</name>
</gene>
<proteinExistence type="inferred from homology"/>
<name>GPMI_MESH7</name>
<evidence type="ECO:0000255" key="1">
    <source>
        <dbReference type="HAMAP-Rule" id="MF_01038"/>
    </source>
</evidence>
<reference key="1">
    <citation type="journal article" date="2005" name="J. Bacteriol.">
        <title>Swine and poultry pathogens: the complete genome sequences of two strains of Mycoplasma hyopneumoniae and a strain of Mycoplasma synoviae.</title>
        <authorList>
            <person name="Vasconcelos A.T.R."/>
            <person name="Ferreira H.B."/>
            <person name="Bizarro C.V."/>
            <person name="Bonatto S.L."/>
            <person name="Carvalho M.O."/>
            <person name="Pinto P.M."/>
            <person name="Almeida D.F."/>
            <person name="Almeida L.G.P."/>
            <person name="Almeida R."/>
            <person name="Alves-Junior L."/>
            <person name="Assuncao E.N."/>
            <person name="Azevedo V.A.C."/>
            <person name="Bogo M.R."/>
            <person name="Brigido M.M."/>
            <person name="Brocchi M."/>
            <person name="Burity H.A."/>
            <person name="Camargo A.A."/>
            <person name="Camargo S.S."/>
            <person name="Carepo M.S."/>
            <person name="Carraro D.M."/>
            <person name="de Mattos Cascardo J.C."/>
            <person name="Castro L.A."/>
            <person name="Cavalcanti G."/>
            <person name="Chemale G."/>
            <person name="Collevatti R.G."/>
            <person name="Cunha C.W."/>
            <person name="Dallagiovanna B."/>
            <person name="Dambros B.P."/>
            <person name="Dellagostin O.A."/>
            <person name="Falcao C."/>
            <person name="Fantinatti-Garboggini F."/>
            <person name="Felipe M.S.S."/>
            <person name="Fiorentin L."/>
            <person name="Franco G.R."/>
            <person name="Freitas N.S.A."/>
            <person name="Frias D."/>
            <person name="Grangeiro T.B."/>
            <person name="Grisard E.C."/>
            <person name="Guimaraes C.T."/>
            <person name="Hungria M."/>
            <person name="Jardim S.N."/>
            <person name="Krieger M.A."/>
            <person name="Laurino J.P."/>
            <person name="Lima L.F.A."/>
            <person name="Lopes M.I."/>
            <person name="Loreto E.L.S."/>
            <person name="Madeira H.M.F."/>
            <person name="Manfio G.P."/>
            <person name="Maranhao A.Q."/>
            <person name="Martinkovics C.T."/>
            <person name="Medeiros S.R.B."/>
            <person name="Moreira M.A.M."/>
            <person name="Neiva M."/>
            <person name="Ramalho-Neto C.E."/>
            <person name="Nicolas M.F."/>
            <person name="Oliveira S.C."/>
            <person name="Paixao R.F.C."/>
            <person name="Pedrosa F.O."/>
            <person name="Pena S.D.J."/>
            <person name="Pereira M."/>
            <person name="Pereira-Ferrari L."/>
            <person name="Piffer I."/>
            <person name="Pinto L.S."/>
            <person name="Potrich D.P."/>
            <person name="Salim A.C.M."/>
            <person name="Santos F.R."/>
            <person name="Schmitt R."/>
            <person name="Schneider M.P.C."/>
            <person name="Schrank A."/>
            <person name="Schrank I.S."/>
            <person name="Schuck A.F."/>
            <person name="Seuanez H.N."/>
            <person name="Silva D.W."/>
            <person name="Silva R."/>
            <person name="Silva S.C."/>
            <person name="Soares C.M.A."/>
            <person name="Souza K.R.L."/>
            <person name="Souza R.C."/>
            <person name="Staats C.C."/>
            <person name="Steffens M.B.R."/>
            <person name="Teixeira S.M.R."/>
            <person name="Urmenyi T.P."/>
            <person name="Vainstein M.H."/>
            <person name="Zuccherato L.W."/>
            <person name="Simpson A.J.G."/>
            <person name="Zaha A."/>
        </authorList>
    </citation>
    <scope>NUCLEOTIDE SEQUENCE [LARGE SCALE GENOMIC DNA]</scope>
    <source>
        <strain>7448</strain>
    </source>
</reference>